<sequence length="379" mass="44435">MSCPYAGNGNDHDDSAVPLTTEVGKIYGEYLMLDKLLDAQCMLSEEDKRPVHDEHLFIITHQAYELWFKQIIFEFDSIRDMLDAEVIDETKTLEIVKRLNRVVLILKLLVDQVPILETMTPLDFMDFRKYLAPASGFQSLQFRLIENKLGVLTEQRVRYNQKYSDVFSDEEARNSIRNSEKDPSLLELVQRWLERTPGLEETGFNFWAKFQESVDRFLEAQVQSAMEEPVEKAKNYRLMDIEKRREVYRSIFDPAVHDALVRRGDRRFSHRALQGAIMITFYRDEPRFSQPHQLLTLLMDIDSLITKWRYNHVIMVQRMIGSQQLGTGGSSGYQYLRSTLSDRYKVFLDLFNLSTFLIPREAIPPLDETIRKKLINKSV</sequence>
<keyword id="KW-0223">Dioxygenase</keyword>
<keyword id="KW-0349">Heme</keyword>
<keyword id="KW-0408">Iron</keyword>
<keyword id="KW-0479">Metal-binding</keyword>
<keyword id="KW-0560">Oxidoreductase</keyword>
<keyword id="KW-1185">Reference proteome</keyword>
<keyword id="KW-0823">Tryptophan catabolism</keyword>
<proteinExistence type="inferred from homology"/>
<evidence type="ECO:0000255" key="1">
    <source>
        <dbReference type="HAMAP-Rule" id="MF_03020"/>
    </source>
</evidence>
<protein>
    <recommendedName>
        <fullName evidence="1">Tryptophan 2,3-dioxygenase</fullName>
        <shortName evidence="1">TDO</shortName>
        <ecNumber evidence="1">1.13.11.11</ecNumber>
    </recommendedName>
    <alternativeName>
        <fullName evidence="1">Protein vermilion</fullName>
    </alternativeName>
    <alternativeName>
        <fullName evidence="1">Tryptamin 2,3-dioxygenase</fullName>
    </alternativeName>
    <alternativeName>
        <fullName evidence="1">Tryptophan oxygenase</fullName>
        <shortName evidence="1">TO</shortName>
        <shortName evidence="1">TRPO</shortName>
    </alternativeName>
    <alternativeName>
        <fullName evidence="1">Tryptophan pyrrolase</fullName>
    </alternativeName>
    <alternativeName>
        <fullName evidence="1">Tryptophanase</fullName>
    </alternativeName>
</protein>
<reference key="1">
    <citation type="journal article" date="2007" name="Nature">
        <title>Evolution of genes and genomes on the Drosophila phylogeny.</title>
        <authorList>
            <consortium name="Drosophila 12 genomes consortium"/>
        </authorList>
    </citation>
    <scope>NUCLEOTIDE SEQUENCE [LARGE SCALE GENOMIC DNA]</scope>
    <source>
        <strain>Rob3c / Tucson 14021-0248.25</strain>
    </source>
</reference>
<dbReference type="EC" id="1.13.11.11" evidence="1"/>
<dbReference type="EMBL" id="CH480830">
    <property type="protein sequence ID" value="EDW45766.1"/>
    <property type="molecule type" value="Genomic_DNA"/>
</dbReference>
<dbReference type="SMR" id="B4IDV8"/>
<dbReference type="STRING" id="7238.B4IDV8"/>
<dbReference type="EnsemblMetazoa" id="FBtr0194428">
    <property type="protein sequence ID" value="FBpp0192920"/>
    <property type="gene ID" value="FBgn0166386"/>
</dbReference>
<dbReference type="EnsemblMetazoa" id="XM_002041882.2">
    <property type="protein sequence ID" value="XP_002041918.1"/>
    <property type="gene ID" value="LOC6617605"/>
</dbReference>
<dbReference type="GeneID" id="6617605"/>
<dbReference type="KEGG" id="dse:6617605"/>
<dbReference type="CTD" id="136040130"/>
<dbReference type="HOGENOM" id="CLU_045599_1_1_1"/>
<dbReference type="OMA" id="WRWRNDH"/>
<dbReference type="OrthoDB" id="17725at7215"/>
<dbReference type="PhylomeDB" id="B4IDV8"/>
<dbReference type="UniPathway" id="UPA00271"/>
<dbReference type="UniPathway" id="UPA00333">
    <property type="reaction ID" value="UER00453"/>
</dbReference>
<dbReference type="Proteomes" id="UP000001292">
    <property type="component" value="Unassembled WGS sequence"/>
</dbReference>
<dbReference type="GO" id="GO:0020037">
    <property type="term" value="F:heme binding"/>
    <property type="evidence" value="ECO:0000250"/>
    <property type="project" value="UniProtKB"/>
</dbReference>
<dbReference type="GO" id="GO:0046872">
    <property type="term" value="F:metal ion binding"/>
    <property type="evidence" value="ECO:0007669"/>
    <property type="project" value="UniProtKB-KW"/>
</dbReference>
<dbReference type="GO" id="GO:0004833">
    <property type="term" value="F:tryptophan 2,3-dioxygenase activity"/>
    <property type="evidence" value="ECO:0000250"/>
    <property type="project" value="UniProtKB"/>
</dbReference>
<dbReference type="GO" id="GO:0019442">
    <property type="term" value="P:L-tryptophan catabolic process to acetyl-CoA"/>
    <property type="evidence" value="ECO:0007669"/>
    <property type="project" value="TreeGrafter"/>
</dbReference>
<dbReference type="GO" id="GO:0019441">
    <property type="term" value="P:L-tryptophan catabolic process to kynurenine"/>
    <property type="evidence" value="ECO:0000250"/>
    <property type="project" value="UniProtKB"/>
</dbReference>
<dbReference type="GO" id="GO:0006727">
    <property type="term" value="P:ommochrome biosynthetic process"/>
    <property type="evidence" value="ECO:0007669"/>
    <property type="project" value="UniProtKB-UniRule"/>
</dbReference>
<dbReference type="GO" id="GO:0051289">
    <property type="term" value="P:protein homotetramerization"/>
    <property type="evidence" value="ECO:0007669"/>
    <property type="project" value="EnsemblMetazoa"/>
</dbReference>
<dbReference type="FunFam" id="1.10.287.3810:FF:000001">
    <property type="entry name" value="Tryptophan 2,3-dioxygenase"/>
    <property type="match status" value="1"/>
</dbReference>
<dbReference type="Gene3D" id="1.10.287.3810">
    <property type="match status" value="1"/>
</dbReference>
<dbReference type="Gene3D" id="1.20.58.480">
    <property type="match status" value="1"/>
</dbReference>
<dbReference type="HAMAP" id="MF_01972">
    <property type="entry name" value="T23O"/>
    <property type="match status" value="1"/>
</dbReference>
<dbReference type="InterPro" id="IPR037217">
    <property type="entry name" value="Trp/Indoleamine_2_3_dOase-like"/>
</dbReference>
<dbReference type="InterPro" id="IPR004981">
    <property type="entry name" value="Trp_2_3_dOase"/>
</dbReference>
<dbReference type="PANTHER" id="PTHR10138">
    <property type="entry name" value="TRYPTOPHAN 2,3-DIOXYGENASE"/>
    <property type="match status" value="1"/>
</dbReference>
<dbReference type="PANTHER" id="PTHR10138:SF0">
    <property type="entry name" value="TRYPTOPHAN 2,3-DIOXYGENASE"/>
    <property type="match status" value="1"/>
</dbReference>
<dbReference type="Pfam" id="PF03301">
    <property type="entry name" value="Trp_dioxygenase"/>
    <property type="match status" value="1"/>
</dbReference>
<dbReference type="SUPFAM" id="SSF140959">
    <property type="entry name" value="Indolic compounds 2,3-dioxygenase-like"/>
    <property type="match status" value="1"/>
</dbReference>
<accession>B4IDV8</accession>
<organism>
    <name type="scientific">Drosophila sechellia</name>
    <name type="common">Fruit fly</name>
    <dbReference type="NCBI Taxonomy" id="7238"/>
    <lineage>
        <taxon>Eukaryota</taxon>
        <taxon>Metazoa</taxon>
        <taxon>Ecdysozoa</taxon>
        <taxon>Arthropoda</taxon>
        <taxon>Hexapoda</taxon>
        <taxon>Insecta</taxon>
        <taxon>Pterygota</taxon>
        <taxon>Neoptera</taxon>
        <taxon>Endopterygota</taxon>
        <taxon>Diptera</taxon>
        <taxon>Brachycera</taxon>
        <taxon>Muscomorpha</taxon>
        <taxon>Ephydroidea</taxon>
        <taxon>Drosophilidae</taxon>
        <taxon>Drosophila</taxon>
        <taxon>Sophophora</taxon>
    </lineage>
</organism>
<feature type="chain" id="PRO_0000360880" description="Tryptophan 2,3-dioxygenase">
    <location>
        <begin position="1"/>
        <end position="379"/>
    </location>
</feature>
<feature type="binding site" evidence="1">
    <location>
        <begin position="57"/>
        <end position="61"/>
    </location>
    <ligand>
        <name>substrate</name>
    </ligand>
</feature>
<feature type="binding site" evidence="1">
    <location>
        <position position="128"/>
    </location>
    <ligand>
        <name>substrate</name>
    </ligand>
</feature>
<feature type="binding site" description="axial binding residue" evidence="1">
    <location>
        <position position="312"/>
    </location>
    <ligand>
        <name>heme</name>
        <dbReference type="ChEBI" id="CHEBI:30413"/>
    </ligand>
    <ligandPart>
        <name>Fe</name>
        <dbReference type="ChEBI" id="CHEBI:18248"/>
    </ligandPart>
</feature>
<feature type="binding site" evidence="1">
    <location>
        <position position="327"/>
    </location>
    <ligand>
        <name>substrate</name>
    </ligand>
</feature>
<name>T23O_DROSE</name>
<comment type="function">
    <text evidence="1">Heme-dependent dioxygenase that catalyzes the oxidative cleavage of the L-tryptophan (L-Trp) pyrrole ring and converts L-tryptophan to N-formyl-L-kynurenine. Catalyzes the oxidative cleavage of the indole moiety.</text>
</comment>
<comment type="catalytic activity">
    <reaction evidence="1">
        <text>L-tryptophan + O2 = N-formyl-L-kynurenine</text>
        <dbReference type="Rhea" id="RHEA:24536"/>
        <dbReference type="ChEBI" id="CHEBI:15379"/>
        <dbReference type="ChEBI" id="CHEBI:57912"/>
        <dbReference type="ChEBI" id="CHEBI:58629"/>
        <dbReference type="EC" id="1.13.11.11"/>
    </reaction>
</comment>
<comment type="cofactor">
    <cofactor evidence="1">
        <name>heme</name>
        <dbReference type="ChEBI" id="CHEBI:30413"/>
    </cofactor>
    <text evidence="1">Binds 1 heme group per subunit.</text>
</comment>
<comment type="pathway">
    <text evidence="1">Amino-acid degradation; L-tryptophan degradation via kynurenine pathway; L-kynurenine from L-tryptophan: step 1/2.</text>
</comment>
<comment type="pathway">
    <text evidence="1">Pigment biosynthesis; ommochrome biosynthesis.</text>
</comment>
<comment type="subunit">
    <text evidence="1">Homotetramer. Dimer of dimers.</text>
</comment>
<comment type="similarity">
    <text evidence="1">Belongs to the tryptophan 2,3-dioxygenase family.</text>
</comment>
<gene>
    <name evidence="1" type="primary">v</name>
    <name type="ORF">GM11443</name>
</gene>